<feature type="chain" id="PRO_0000272585" description="Phosphate import ATP-binding protein PstB">
    <location>
        <begin position="1"/>
        <end position="307"/>
    </location>
</feature>
<feature type="domain" description="ABC transporter" evidence="1">
    <location>
        <begin position="48"/>
        <end position="302"/>
    </location>
</feature>
<feature type="region of interest" description="Disordered" evidence="2">
    <location>
        <begin position="1"/>
        <end position="30"/>
    </location>
</feature>
<feature type="binding site" evidence="1">
    <location>
        <begin position="80"/>
        <end position="87"/>
    </location>
    <ligand>
        <name>ATP</name>
        <dbReference type="ChEBI" id="CHEBI:30616"/>
    </ligand>
</feature>
<reference key="1">
    <citation type="journal article" date="2006" name="BMC Genomics">
        <title>The genome of the square archaeon Haloquadratum walsbyi: life at the limits of water activity.</title>
        <authorList>
            <person name="Bolhuis H."/>
            <person name="Palm P."/>
            <person name="Wende A."/>
            <person name="Falb M."/>
            <person name="Rampp M."/>
            <person name="Rodriguez-Valera F."/>
            <person name="Pfeiffer F."/>
            <person name="Oesterhelt D."/>
        </authorList>
    </citation>
    <scope>NUCLEOTIDE SEQUENCE [LARGE SCALE GENOMIC DNA]</scope>
    <source>
        <strain>DSM 16790 / HBSQ001</strain>
    </source>
</reference>
<comment type="function">
    <text evidence="1">Part of the ABC transporter complex PstSACB involved in phosphate import. Responsible for energy coupling to the transport system.</text>
</comment>
<comment type="catalytic activity">
    <reaction evidence="1">
        <text>phosphate(out) + ATP + H2O = ADP + 2 phosphate(in) + H(+)</text>
        <dbReference type="Rhea" id="RHEA:24440"/>
        <dbReference type="ChEBI" id="CHEBI:15377"/>
        <dbReference type="ChEBI" id="CHEBI:15378"/>
        <dbReference type="ChEBI" id="CHEBI:30616"/>
        <dbReference type="ChEBI" id="CHEBI:43474"/>
        <dbReference type="ChEBI" id="CHEBI:456216"/>
        <dbReference type="EC" id="7.3.2.1"/>
    </reaction>
</comment>
<comment type="subunit">
    <text evidence="1">The complex is composed of two ATP-binding proteins (PstB), two transmembrane proteins (PstC and PstA) and a solute-binding protein (PstS).</text>
</comment>
<comment type="subcellular location">
    <subcellularLocation>
        <location evidence="1">Cell membrane</location>
        <topology evidence="1">Peripheral membrane protein</topology>
    </subcellularLocation>
</comment>
<comment type="similarity">
    <text evidence="1">Belongs to the ABC transporter superfamily. Phosphate importer (TC 3.A.1.7) family.</text>
</comment>
<proteinExistence type="inferred from homology"/>
<sequence>MSETTYTTTEDTDDTNSTDSMVGTTTGETDEYVREEWREYSFDVPTKLGVDDLDVYYGDDQALEGVSMEIPEKSVTALIGPSGCGKSTFLRCLNRMNDRVSSARIDGSVTLDSQEIYQDGVNLVELRKRVGMVFQSPNPFPKSIRENIAYGPEKHGDIDTGVLARLLGRSDEEQREELVERCLRDAALWDEVHDRLDDNALGLSGGQQQRLCIARCLSVDPEVILMDEPASALDPIATAKIEDLIAELSKEYTVVIVTHNMQQAARISEQTAVFLTGGELVEYGDTDQVFENPQSERVEDYITGKFG</sequence>
<accession>Q18K56</accession>
<evidence type="ECO:0000255" key="1">
    <source>
        <dbReference type="HAMAP-Rule" id="MF_01702"/>
    </source>
</evidence>
<evidence type="ECO:0000256" key="2">
    <source>
        <dbReference type="SAM" id="MobiDB-lite"/>
    </source>
</evidence>
<name>PSTB_HALWD</name>
<organism>
    <name type="scientific">Haloquadratum walsbyi (strain DSM 16790 / HBSQ001)</name>
    <dbReference type="NCBI Taxonomy" id="362976"/>
    <lineage>
        <taxon>Archaea</taxon>
        <taxon>Methanobacteriati</taxon>
        <taxon>Methanobacteriota</taxon>
        <taxon>Stenosarchaea group</taxon>
        <taxon>Halobacteria</taxon>
        <taxon>Halobacteriales</taxon>
        <taxon>Haloferacaceae</taxon>
        <taxon>Haloquadratum</taxon>
    </lineage>
</organism>
<dbReference type="EC" id="7.3.2.1" evidence="1"/>
<dbReference type="EMBL" id="AM180088">
    <property type="protein sequence ID" value="CAJ51596.1"/>
    <property type="molecule type" value="Genomic_DNA"/>
</dbReference>
<dbReference type="SMR" id="Q18K56"/>
<dbReference type="STRING" id="362976.HQ_1468A"/>
<dbReference type="KEGG" id="hwa:HQ_1468A"/>
<dbReference type="eggNOG" id="arCOG00231">
    <property type="taxonomic scope" value="Archaea"/>
</dbReference>
<dbReference type="HOGENOM" id="CLU_000604_1_22_2"/>
<dbReference type="Proteomes" id="UP000001975">
    <property type="component" value="Chromosome"/>
</dbReference>
<dbReference type="GO" id="GO:0005886">
    <property type="term" value="C:plasma membrane"/>
    <property type="evidence" value="ECO:0007669"/>
    <property type="project" value="UniProtKB-SubCell"/>
</dbReference>
<dbReference type="GO" id="GO:0005524">
    <property type="term" value="F:ATP binding"/>
    <property type="evidence" value="ECO:0007669"/>
    <property type="project" value="UniProtKB-KW"/>
</dbReference>
<dbReference type="GO" id="GO:0016887">
    <property type="term" value="F:ATP hydrolysis activity"/>
    <property type="evidence" value="ECO:0007669"/>
    <property type="project" value="InterPro"/>
</dbReference>
<dbReference type="GO" id="GO:0015415">
    <property type="term" value="F:ATPase-coupled phosphate ion transmembrane transporter activity"/>
    <property type="evidence" value="ECO:0007669"/>
    <property type="project" value="UniProtKB-EC"/>
</dbReference>
<dbReference type="GO" id="GO:0035435">
    <property type="term" value="P:phosphate ion transmembrane transport"/>
    <property type="evidence" value="ECO:0007669"/>
    <property type="project" value="InterPro"/>
</dbReference>
<dbReference type="CDD" id="cd03260">
    <property type="entry name" value="ABC_PstB_phosphate_transporter"/>
    <property type="match status" value="1"/>
</dbReference>
<dbReference type="Gene3D" id="3.40.50.300">
    <property type="entry name" value="P-loop containing nucleotide triphosphate hydrolases"/>
    <property type="match status" value="1"/>
</dbReference>
<dbReference type="InterPro" id="IPR003593">
    <property type="entry name" value="AAA+_ATPase"/>
</dbReference>
<dbReference type="InterPro" id="IPR003439">
    <property type="entry name" value="ABC_transporter-like_ATP-bd"/>
</dbReference>
<dbReference type="InterPro" id="IPR017871">
    <property type="entry name" value="ABC_transporter-like_CS"/>
</dbReference>
<dbReference type="InterPro" id="IPR027417">
    <property type="entry name" value="P-loop_NTPase"/>
</dbReference>
<dbReference type="InterPro" id="IPR005670">
    <property type="entry name" value="PstB-like"/>
</dbReference>
<dbReference type="NCBIfam" id="TIGR00972">
    <property type="entry name" value="3a0107s01c2"/>
    <property type="match status" value="1"/>
</dbReference>
<dbReference type="PANTHER" id="PTHR43423">
    <property type="entry name" value="ABC TRANSPORTER I FAMILY MEMBER 17"/>
    <property type="match status" value="1"/>
</dbReference>
<dbReference type="PANTHER" id="PTHR43423:SF1">
    <property type="entry name" value="ABC TRANSPORTER I FAMILY MEMBER 17"/>
    <property type="match status" value="1"/>
</dbReference>
<dbReference type="Pfam" id="PF00005">
    <property type="entry name" value="ABC_tran"/>
    <property type="match status" value="1"/>
</dbReference>
<dbReference type="SMART" id="SM00382">
    <property type="entry name" value="AAA"/>
    <property type="match status" value="1"/>
</dbReference>
<dbReference type="SUPFAM" id="SSF52540">
    <property type="entry name" value="P-loop containing nucleoside triphosphate hydrolases"/>
    <property type="match status" value="1"/>
</dbReference>
<dbReference type="PROSITE" id="PS00211">
    <property type="entry name" value="ABC_TRANSPORTER_1"/>
    <property type="match status" value="1"/>
</dbReference>
<dbReference type="PROSITE" id="PS50893">
    <property type="entry name" value="ABC_TRANSPORTER_2"/>
    <property type="match status" value="1"/>
</dbReference>
<dbReference type="PROSITE" id="PS51238">
    <property type="entry name" value="PSTB"/>
    <property type="match status" value="1"/>
</dbReference>
<keyword id="KW-0067">ATP-binding</keyword>
<keyword id="KW-1003">Cell membrane</keyword>
<keyword id="KW-0472">Membrane</keyword>
<keyword id="KW-0547">Nucleotide-binding</keyword>
<keyword id="KW-0592">Phosphate transport</keyword>
<keyword id="KW-1185">Reference proteome</keyword>
<keyword id="KW-1278">Translocase</keyword>
<keyword id="KW-0813">Transport</keyword>
<gene>
    <name evidence="1" type="primary">pstB</name>
    <name type="ordered locus">HQ_1468A</name>
</gene>
<protein>
    <recommendedName>
        <fullName evidence="1">Phosphate import ATP-binding protein PstB</fullName>
        <ecNumber evidence="1">7.3.2.1</ecNumber>
    </recommendedName>
    <alternativeName>
        <fullName evidence="1">ABC phosphate transporter</fullName>
    </alternativeName>
    <alternativeName>
        <fullName evidence="1">Phosphate-transporting ATPase</fullName>
    </alternativeName>
</protein>